<evidence type="ECO:0000250" key="1">
    <source>
        <dbReference type="UniProtKB" id="Q8K4R4"/>
    </source>
</evidence>
<evidence type="ECO:0000256" key="2">
    <source>
        <dbReference type="SAM" id="MobiDB-lite"/>
    </source>
</evidence>
<evidence type="ECO:0000269" key="3">
    <source>
    </source>
</evidence>
<evidence type="ECO:0000269" key="4">
    <source>
    </source>
</evidence>
<evidence type="ECO:0000303" key="5">
    <source>
    </source>
</evidence>
<evidence type="ECO:0000303" key="6">
    <source>
    </source>
</evidence>
<evidence type="ECO:0000303" key="7">
    <source>
    </source>
</evidence>
<evidence type="ECO:0000305" key="8"/>
<evidence type="ECO:0000305" key="9">
    <source>
    </source>
</evidence>
<evidence type="ECO:0000305" key="10">
    <source>
    </source>
</evidence>
<dbReference type="EMBL" id="AF171102">
    <property type="protein sequence ID" value="AAF06148.1"/>
    <property type="molecule type" value="mRNA"/>
</dbReference>
<dbReference type="EMBL" id="AK290838">
    <property type="protein sequence ID" value="BAF83527.1"/>
    <property type="molecule type" value="mRNA"/>
</dbReference>
<dbReference type="EMBL" id="AC079331">
    <property type="status" value="NOT_ANNOTATED_CDS"/>
    <property type="molecule type" value="Genomic_DNA"/>
</dbReference>
<dbReference type="EMBL" id="AC110921">
    <property type="status" value="NOT_ANNOTATED_CDS"/>
    <property type="molecule type" value="Genomic_DNA"/>
</dbReference>
<dbReference type="EMBL" id="BC007905">
    <property type="protein sequence ID" value="AAH07905.1"/>
    <property type="molecule type" value="mRNA"/>
</dbReference>
<dbReference type="EMBL" id="BC067095">
    <property type="protein sequence ID" value="AAH67095.1"/>
    <property type="molecule type" value="mRNA"/>
</dbReference>
<dbReference type="CCDS" id="CCDS58587.1">
    <molecule id="Q9UKF7-2"/>
</dbReference>
<dbReference type="CCDS" id="CCDS58588.1">
    <molecule id="Q9UKF7-1"/>
</dbReference>
<dbReference type="RefSeq" id="NP_036549.2">
    <molecule id="Q9UKF7-1"/>
    <property type="nucleotide sequence ID" value="NM_012417.3"/>
</dbReference>
<dbReference type="RefSeq" id="NP_858057.1">
    <property type="nucleotide sequence ID" value="NM_181671.2"/>
</dbReference>
<dbReference type="SMR" id="Q9UKF7"/>
<dbReference type="BioGRID" id="117607">
    <property type="interactions" value="22"/>
</dbReference>
<dbReference type="FunCoup" id="Q9UKF7">
    <property type="interactions" value="2168"/>
</dbReference>
<dbReference type="IntAct" id="Q9UKF7">
    <property type="interactions" value="22"/>
</dbReference>
<dbReference type="STRING" id="9606.ENSP00000464006"/>
<dbReference type="SwissLipids" id="SLP:000000413"/>
<dbReference type="SwissLipids" id="SLP:000000992">
    <molecule id="Q9UKF7-1"/>
</dbReference>
<dbReference type="SwissLipids" id="SLP:000000993">
    <molecule id="Q9UKF7-2"/>
</dbReference>
<dbReference type="GlyGen" id="Q9UKF7">
    <property type="glycosylation" value="1 site, 1 O-linked glycan (1 site)"/>
</dbReference>
<dbReference type="iPTMnet" id="Q9UKF7"/>
<dbReference type="PhosphoSitePlus" id="Q9UKF7"/>
<dbReference type="BioMuta" id="PITPNC1"/>
<dbReference type="DMDM" id="147720965"/>
<dbReference type="jPOST" id="Q9UKF7"/>
<dbReference type="MassIVE" id="Q9UKF7"/>
<dbReference type="PaxDb" id="9606-ENSP00000464006"/>
<dbReference type="PeptideAtlas" id="Q9UKF7"/>
<dbReference type="ProteomicsDB" id="84783">
    <molecule id="Q9UKF7-1"/>
</dbReference>
<dbReference type="ProteomicsDB" id="84784">
    <molecule id="Q9UKF7-2"/>
</dbReference>
<dbReference type="Pumba" id="Q9UKF7"/>
<dbReference type="Antibodypedia" id="9639">
    <property type="antibodies" value="72 antibodies from 16 providers"/>
</dbReference>
<dbReference type="DNASU" id="26207"/>
<dbReference type="Ensembl" id="ENST00000581322.6">
    <molecule id="Q9UKF7-1"/>
    <property type="protein sequence ID" value="ENSP00000464006.1"/>
    <property type="gene ID" value="ENSG00000154217.16"/>
</dbReference>
<dbReference type="GeneID" id="26207"/>
<dbReference type="KEGG" id="hsa:26207"/>
<dbReference type="MANE-Select" id="ENST00000581322.6">
    <property type="protein sequence ID" value="ENSP00000464006.1"/>
    <property type="RefSeq nucleotide sequence ID" value="NM_012417.4"/>
    <property type="RefSeq protein sequence ID" value="NP_036549.2"/>
</dbReference>
<dbReference type="UCSC" id="uc002jgb.5">
    <molecule id="Q9UKF7-1"/>
    <property type="organism name" value="human"/>
</dbReference>
<dbReference type="AGR" id="HGNC:21045"/>
<dbReference type="CTD" id="26207"/>
<dbReference type="DisGeNET" id="26207"/>
<dbReference type="GeneCards" id="PITPNC1"/>
<dbReference type="HGNC" id="HGNC:21045">
    <property type="gene designation" value="PITPNC1"/>
</dbReference>
<dbReference type="HPA" id="ENSG00000154217">
    <property type="expression patterns" value="Low tissue specificity"/>
</dbReference>
<dbReference type="MIM" id="605134">
    <property type="type" value="gene"/>
</dbReference>
<dbReference type="neXtProt" id="NX_Q9UKF7"/>
<dbReference type="OpenTargets" id="ENSG00000154217"/>
<dbReference type="PharmGKB" id="PA128394642"/>
<dbReference type="VEuPathDB" id="HostDB:ENSG00000154217"/>
<dbReference type="eggNOG" id="KOG3668">
    <property type="taxonomic scope" value="Eukaryota"/>
</dbReference>
<dbReference type="GeneTree" id="ENSGT00940000160720"/>
<dbReference type="HOGENOM" id="CLU_046509_2_0_1"/>
<dbReference type="InParanoid" id="Q9UKF7"/>
<dbReference type="OrthoDB" id="18453at2759"/>
<dbReference type="PAN-GO" id="Q9UKF7">
    <property type="GO annotations" value="3 GO annotations based on evolutionary models"/>
</dbReference>
<dbReference type="PathwayCommons" id="Q9UKF7"/>
<dbReference type="SignaLink" id="Q9UKF7"/>
<dbReference type="SIGNOR" id="Q9UKF7"/>
<dbReference type="BioGRID-ORCS" id="26207">
    <property type="hits" value="15 hits in 1143 CRISPR screens"/>
</dbReference>
<dbReference type="ChiTaRS" id="PITPNC1">
    <property type="organism name" value="human"/>
</dbReference>
<dbReference type="GenomeRNAi" id="26207"/>
<dbReference type="Pharos" id="Q9UKF7">
    <property type="development level" value="Tbio"/>
</dbReference>
<dbReference type="PRO" id="PR:Q9UKF7"/>
<dbReference type="Proteomes" id="UP000005640">
    <property type="component" value="Chromosome 17"/>
</dbReference>
<dbReference type="RNAct" id="Q9UKF7">
    <property type="molecule type" value="protein"/>
</dbReference>
<dbReference type="Bgee" id="ENSG00000154217">
    <property type="expression patterns" value="Expressed in endothelial cell and 190 other cell types or tissues"/>
</dbReference>
<dbReference type="ExpressionAtlas" id="Q9UKF7">
    <property type="expression patterns" value="baseline and differential"/>
</dbReference>
<dbReference type="GO" id="GO:0005737">
    <property type="term" value="C:cytoplasm"/>
    <property type="evidence" value="ECO:0000314"/>
    <property type="project" value="UniProtKB"/>
</dbReference>
<dbReference type="GO" id="GO:0005829">
    <property type="term" value="C:cytosol"/>
    <property type="evidence" value="ECO:0000314"/>
    <property type="project" value="HPA"/>
</dbReference>
<dbReference type="GO" id="GO:0005654">
    <property type="term" value="C:nucleoplasm"/>
    <property type="evidence" value="ECO:0000314"/>
    <property type="project" value="HPA"/>
</dbReference>
<dbReference type="GO" id="GO:0070300">
    <property type="term" value="F:phosphatidic acid binding"/>
    <property type="evidence" value="ECO:0000314"/>
    <property type="project" value="BHF-UCL"/>
</dbReference>
<dbReference type="GO" id="GO:1990050">
    <property type="term" value="F:phosphatidic acid transfer activity"/>
    <property type="evidence" value="ECO:0000314"/>
    <property type="project" value="UniProtKB"/>
</dbReference>
<dbReference type="GO" id="GO:1901611">
    <property type="term" value="F:phosphatidylglycerol binding"/>
    <property type="evidence" value="ECO:0000314"/>
    <property type="project" value="BHF-UCL"/>
</dbReference>
<dbReference type="GO" id="GO:0035091">
    <property type="term" value="F:phosphatidylinositol binding"/>
    <property type="evidence" value="ECO:0000314"/>
    <property type="project" value="BHF-UCL"/>
</dbReference>
<dbReference type="GO" id="GO:0008526">
    <property type="term" value="F:phosphatidylinositol transfer activity"/>
    <property type="evidence" value="ECO:0000314"/>
    <property type="project" value="BHF-UCL"/>
</dbReference>
<dbReference type="GO" id="GO:0015914">
    <property type="term" value="P:phospholipid transport"/>
    <property type="evidence" value="ECO:0000314"/>
    <property type="project" value="BHF-UCL"/>
</dbReference>
<dbReference type="GO" id="GO:0007165">
    <property type="term" value="P:signal transduction"/>
    <property type="evidence" value="ECO:0000315"/>
    <property type="project" value="UniProtKB"/>
</dbReference>
<dbReference type="CDD" id="cd08890">
    <property type="entry name" value="SRPBCC_PITPNC1_like"/>
    <property type="match status" value="1"/>
</dbReference>
<dbReference type="FunFam" id="3.30.530.20:FF:000011">
    <property type="entry name" value="cytoplasmic phosphatidylinositol transfer protein 1 isoform X2"/>
    <property type="match status" value="1"/>
</dbReference>
<dbReference type="Gene3D" id="3.30.530.20">
    <property type="match status" value="1"/>
</dbReference>
<dbReference type="InterPro" id="IPR001666">
    <property type="entry name" value="PI_transfer"/>
</dbReference>
<dbReference type="InterPro" id="IPR055261">
    <property type="entry name" value="PI_transfer_N"/>
</dbReference>
<dbReference type="InterPro" id="IPR023393">
    <property type="entry name" value="START-like_dom_sf"/>
</dbReference>
<dbReference type="PANTHER" id="PTHR10658:SF55">
    <property type="entry name" value="CYTOPLASMIC PHOSPHATIDYLINOSITOL TRANSFER PROTEIN 1"/>
    <property type="match status" value="1"/>
</dbReference>
<dbReference type="PANTHER" id="PTHR10658">
    <property type="entry name" value="PHOSPHATIDYLINOSITOL TRANSFER PROTEIN"/>
    <property type="match status" value="1"/>
</dbReference>
<dbReference type="Pfam" id="PF02121">
    <property type="entry name" value="IP_trans"/>
    <property type="match status" value="1"/>
</dbReference>
<dbReference type="PRINTS" id="PR00391">
    <property type="entry name" value="PITRANSFER"/>
</dbReference>
<dbReference type="SUPFAM" id="SSF55961">
    <property type="entry name" value="Bet v1-like"/>
    <property type="match status" value="1"/>
</dbReference>
<sequence length="332" mass="38388">MLLKEYRICMPLTVDEYKIGQLYMISKHSHEQSDRGEGVEVVQNEPFEDPHHGNGQFTEKRVYLNSKLPSWARAVVPKIFYVTEKAWNYYPYTITEYTCSFLPKFSIHIETKYEDNKGSNDTIFDNEAKDVEREVCFIDIACDEIPERYYKESEDPKHFKSEKTGRGQLREGWRDSHQPIMCSYKLVTVKFEVWGLQTRVEQFVHKVVRDILLIGHRQAFAWVDEWYDMTMDEVREFERATQEATNKKIGIFPPAISISSIPLLPSSVRSAPSSAPSTPLSTDAPEFLSVPKDRPRKKSAPETLTLPDPEKKATLNLPGMHSSDKPCRPKSE</sequence>
<proteinExistence type="evidence at protein level"/>
<organism>
    <name type="scientific">Homo sapiens</name>
    <name type="common">Human</name>
    <dbReference type="NCBI Taxonomy" id="9606"/>
    <lineage>
        <taxon>Eukaryota</taxon>
        <taxon>Metazoa</taxon>
        <taxon>Chordata</taxon>
        <taxon>Craniata</taxon>
        <taxon>Vertebrata</taxon>
        <taxon>Euteleostomi</taxon>
        <taxon>Mammalia</taxon>
        <taxon>Eutheria</taxon>
        <taxon>Euarchontoglires</taxon>
        <taxon>Primates</taxon>
        <taxon>Haplorrhini</taxon>
        <taxon>Catarrhini</taxon>
        <taxon>Hominidae</taxon>
        <taxon>Homo</taxon>
    </lineage>
</organism>
<gene>
    <name type="primary">PITPNC1</name>
</gene>
<feature type="chain" id="PRO_0000287530" description="Cytoplasmic phosphatidylinositol transfer protein 1">
    <location>
        <begin position="1"/>
        <end position="332"/>
    </location>
</feature>
<feature type="region of interest" description="Disordered" evidence="2">
    <location>
        <begin position="267"/>
        <end position="332"/>
    </location>
</feature>
<feature type="compositionally biased region" description="Low complexity" evidence="2">
    <location>
        <begin position="267"/>
        <end position="285"/>
    </location>
</feature>
<feature type="compositionally biased region" description="Basic and acidic residues" evidence="2">
    <location>
        <begin position="322"/>
        <end position="332"/>
    </location>
</feature>
<feature type="modified residue" description="Phosphoserine" evidence="1">
    <location>
        <position position="119"/>
    </location>
</feature>
<feature type="modified residue" description="Phosphoserine" evidence="1">
    <location>
        <position position="270"/>
    </location>
</feature>
<feature type="modified residue" description="Phosphoserine" evidence="1">
    <location>
        <position position="274"/>
    </location>
</feature>
<feature type="modified residue" description="Phosphothreonine" evidence="1">
    <location>
        <position position="278"/>
    </location>
</feature>
<feature type="splice variant" id="VSP_025545" description="In isoform 2." evidence="5 6">
    <original>FERATQEATNKKIGIFPPAISISSIPLLPSSVRSAPSSAPSTPLSTDAPEFLSVPKDRPRKKSAPETLTLPDPEKKATLNLPGMHSSDKPCRPKSE</original>
    <variation>YEKNMHEQTNIKVCNQHSSPVDDIESHAQTST</variation>
    <location>
        <begin position="237"/>
        <end position="332"/>
    </location>
</feature>
<feature type="sequence conflict" description="In Ref. 2; BAF83527." evidence="8" ref="2">
    <original>K</original>
    <variation>R</variation>
    <location>
        <position position="18"/>
    </location>
</feature>
<feature type="sequence conflict" description="In Ref. 1; AAF06148." evidence="8" ref="1">
    <original>N</original>
    <variation>S</variation>
    <location>
        <position position="126"/>
    </location>
</feature>
<feature type="sequence conflict" description="In Ref. 1; AAF06148." evidence="8" ref="1">
    <original>F</original>
    <variation>S</variation>
    <location>
        <position position="191"/>
    </location>
</feature>
<feature type="sequence conflict" description="In Ref. 2; BAF83527 and 4; AAH07905/AAH67095." evidence="8" ref="2 4">
    <original>E</original>
    <variation>D</variation>
    <location>
        <position position="233"/>
    </location>
</feature>
<comment type="function">
    <molecule>Isoform 1</molecule>
    <text evidence="3 4">Catalyzes the transfer of phosphatidylinositol (PI) and phosphatidic acid (PA) between membranes (PubMed:10531358, PubMed:22822086). Binds PA derived from the phospholipase D signaling pathway and among the cellular PA species, preferably binds to the C16:0/16:1 and C16:1/18:1 PA species (PubMed:22822086).</text>
</comment>
<comment type="function">
    <molecule>Isoform 2</molecule>
    <text evidence="4">Catalyzes the transfer of phosphatidylinositol between membranes.</text>
</comment>
<comment type="catalytic activity">
    <reaction evidence="3 4">
        <text>a 1,2-diacyl-sn-glycero-3-phospho-(1D-myo-inositol)(in) = a 1,2-diacyl-sn-glycero-3-phospho-(1D-myo-inositol)(out)</text>
        <dbReference type="Rhea" id="RHEA:38691"/>
        <dbReference type="ChEBI" id="CHEBI:57880"/>
    </reaction>
    <physiologicalReaction direction="left-to-right" evidence="9">
        <dbReference type="Rhea" id="RHEA:38692"/>
    </physiologicalReaction>
</comment>
<comment type="catalytic activity">
    <reaction evidence="4">
        <text>a 1,2-diacyl-sn-glycero-3-phosphate(in) = a 1,2-diacyl-sn-glycero-3-phosphate(out)</text>
        <dbReference type="Rhea" id="RHEA:36435"/>
        <dbReference type="ChEBI" id="CHEBI:58608"/>
    </reaction>
    <physiologicalReaction direction="left-to-right" evidence="10">
        <dbReference type="Rhea" id="RHEA:36436"/>
    </physiologicalReaction>
</comment>
<comment type="interaction">
    <interactant intactId="EBI-749241">
        <id>Q9UKF7</id>
    </interactant>
    <interactant intactId="EBI-741181">
        <id>Q6RW13</id>
        <label>AGTRAP</label>
    </interactant>
    <organismsDiffer>false</organismsDiffer>
    <experiments>6</experiments>
</comment>
<comment type="interaction">
    <interactant intactId="EBI-749241">
        <id>Q9UKF7</id>
    </interactant>
    <interactant intactId="EBI-2548702">
        <id>Q96DZ9</id>
        <label>CMTM5</label>
    </interactant>
    <organismsDiffer>false</organismsDiffer>
    <experiments>3</experiments>
</comment>
<comment type="interaction">
    <interactant intactId="EBI-11687286">
        <id>Q9UKF7-1</id>
    </interactant>
    <interactant intactId="EBI-1045214">
        <id>Q9H0U4</id>
        <label>RAB1B</label>
    </interactant>
    <organismsDiffer>false</organismsDiffer>
    <experiments>4</experiments>
</comment>
<comment type="interaction">
    <interactant intactId="EBI-14223623">
        <id>Q9UKF7-2</id>
    </interactant>
    <interactant intactId="EBI-11522760">
        <id>Q6RW13-2</id>
        <label>AGTRAP</label>
    </interactant>
    <organismsDiffer>false</organismsDiffer>
    <experiments>3</experiments>
</comment>
<comment type="interaction">
    <interactant intactId="EBI-14223623">
        <id>Q9UKF7-2</id>
    </interactant>
    <interactant intactId="EBI-7054139">
        <id>Q68DC2</id>
        <label>ANKS6</label>
    </interactant>
    <organismsDiffer>false</organismsDiffer>
    <experiments>3</experiments>
</comment>
<comment type="interaction">
    <interactant intactId="EBI-14223623">
        <id>Q9UKF7-2</id>
    </interactant>
    <interactant intactId="EBI-8652492">
        <id>Q9UGQ2</id>
        <label>CACFD1</label>
    </interactant>
    <organismsDiffer>false</organismsDiffer>
    <experiments>3</experiments>
</comment>
<comment type="interaction">
    <interactant intactId="EBI-14223623">
        <id>Q9UKF7-2</id>
    </interactant>
    <interactant intactId="EBI-11522780">
        <id>Q96DZ9-2</id>
        <label>CMTM5</label>
    </interactant>
    <organismsDiffer>false</organismsDiffer>
    <experiments>3</experiments>
</comment>
<comment type="interaction">
    <interactant intactId="EBI-14223623">
        <id>Q9UKF7-2</id>
    </interactant>
    <interactant intactId="EBI-12831978">
        <id>Q6ZPD8</id>
        <label>DGAT2L6</label>
    </interactant>
    <organismsDiffer>false</organismsDiffer>
    <experiments>3</experiments>
</comment>
<comment type="interaction">
    <interactant intactId="EBI-14223623">
        <id>Q9UKF7-2</id>
    </interactant>
    <interactant intactId="EBI-12951679">
        <id>Q2KHT4-3</id>
        <label>GSG1</label>
    </interactant>
    <organismsDiffer>false</organismsDiffer>
    <experiments>3</experiments>
</comment>
<comment type="interaction">
    <interactant intactId="EBI-14223623">
        <id>Q9UKF7-2</id>
    </interactant>
    <interactant intactId="EBI-12937691">
        <id>Q9BUP3-3</id>
        <label>HTATIP2</label>
    </interactant>
    <organismsDiffer>false</organismsDiffer>
    <experiments>3</experiments>
</comment>
<comment type="interaction">
    <interactant intactId="EBI-14223623">
        <id>Q9UKF7-2</id>
    </interactant>
    <interactant intactId="EBI-743591">
        <id>Q9BW62</id>
        <label>KATNAL1</label>
    </interactant>
    <organismsDiffer>false</organismsDiffer>
    <experiments>3</experiments>
</comment>
<comment type="interaction">
    <interactant intactId="EBI-14223623">
        <id>Q9UKF7-2</id>
    </interactant>
    <interactant intactId="EBI-944295">
        <id>Q969L2</id>
        <label>MAL2</label>
    </interactant>
    <organismsDiffer>false</organismsDiffer>
    <experiments>3</experiments>
</comment>
<comment type="interaction">
    <interactant intactId="EBI-14223623">
        <id>Q9UKF7-2</id>
    </interactant>
    <interactant intactId="EBI-1549827">
        <id>Q00765</id>
        <label>REEP5</label>
    </interactant>
    <organismsDiffer>false</organismsDiffer>
    <experiments>3</experiments>
</comment>
<comment type="interaction">
    <interactant intactId="EBI-14223623">
        <id>Q9UKF7-2</id>
    </interactant>
    <interactant intactId="EBI-2695784">
        <id>Q8TAC9</id>
        <label>SCAMP5</label>
    </interactant>
    <organismsDiffer>false</organismsDiffer>
    <experiments>3</experiments>
</comment>
<comment type="interaction">
    <interactant intactId="EBI-14223623">
        <id>Q9UKF7-2</id>
    </interactant>
    <interactant intactId="EBI-12828299">
        <id>O60906</id>
        <label>SMPD2</label>
    </interactant>
    <organismsDiffer>false</organismsDiffer>
    <experiments>3</experiments>
</comment>
<comment type="interaction">
    <interactant intactId="EBI-14223623">
        <id>Q9UKF7-2</id>
    </interactant>
    <interactant intactId="EBI-9071725">
        <id>P08247</id>
        <label>SYP</label>
    </interactant>
    <organismsDiffer>false</organismsDiffer>
    <experiments>3</experiments>
</comment>
<comment type="interaction">
    <interactant intactId="EBI-14223623">
        <id>Q9UKF7-2</id>
    </interactant>
    <interactant intactId="EBI-1044859">
        <id>Q9UBN6</id>
        <label>TNFRSF10D</label>
    </interactant>
    <organismsDiffer>false</organismsDiffer>
    <experiments>3</experiments>
</comment>
<comment type="subcellular location">
    <subcellularLocation>
        <location evidence="3">Cytoplasm</location>
    </subcellularLocation>
</comment>
<comment type="alternative products">
    <event type="alternative splicing"/>
    <isoform>
        <id>Q9UKF7-1</id>
        <name>1</name>
        <name evidence="7">sp1</name>
        <sequence type="displayed"/>
    </isoform>
    <isoform>
        <id>Q9UKF7-2</id>
        <name>2</name>
        <name evidence="7">sp2</name>
        <sequence type="described" ref="VSP_025545"/>
    </isoform>
</comment>
<comment type="tissue specificity">
    <text evidence="3">Ubiquitously expressed.</text>
</comment>
<comment type="similarity">
    <text evidence="8">Belongs to the PtdIns transfer protein family. PI transfer class IIB subfamily.</text>
</comment>
<reference key="1">
    <citation type="journal article" date="1999" name="J. Biol. Chem.">
        <title>Cloning and characterization of a novel human phosphatidylinositol transfer protein, rdgBbeta.</title>
        <authorList>
            <person name="Fullwood Y."/>
            <person name="dos Santos M."/>
            <person name="Hsuan J.J."/>
        </authorList>
    </citation>
    <scope>NUCLEOTIDE SEQUENCE [MRNA] (ISOFORM 1)</scope>
    <scope>FUNCTION</scope>
    <scope>CATALYTIC ACTIVITY</scope>
    <scope>SUBCELLULAR LOCATION</scope>
    <scope>TISSUE SPECIFICITY</scope>
    <source>
        <tissue>Brain</tissue>
    </source>
</reference>
<reference key="2">
    <citation type="journal article" date="2004" name="Nat. Genet.">
        <title>Complete sequencing and characterization of 21,243 full-length human cDNAs.</title>
        <authorList>
            <person name="Ota T."/>
            <person name="Suzuki Y."/>
            <person name="Nishikawa T."/>
            <person name="Otsuki T."/>
            <person name="Sugiyama T."/>
            <person name="Irie R."/>
            <person name="Wakamatsu A."/>
            <person name="Hayashi K."/>
            <person name="Sato H."/>
            <person name="Nagai K."/>
            <person name="Kimura K."/>
            <person name="Makita H."/>
            <person name="Sekine M."/>
            <person name="Obayashi M."/>
            <person name="Nishi T."/>
            <person name="Shibahara T."/>
            <person name="Tanaka T."/>
            <person name="Ishii S."/>
            <person name="Yamamoto J."/>
            <person name="Saito K."/>
            <person name="Kawai Y."/>
            <person name="Isono Y."/>
            <person name="Nakamura Y."/>
            <person name="Nagahari K."/>
            <person name="Murakami K."/>
            <person name="Yasuda T."/>
            <person name="Iwayanagi T."/>
            <person name="Wagatsuma M."/>
            <person name="Shiratori A."/>
            <person name="Sudo H."/>
            <person name="Hosoiri T."/>
            <person name="Kaku Y."/>
            <person name="Kodaira H."/>
            <person name="Kondo H."/>
            <person name="Sugawara M."/>
            <person name="Takahashi M."/>
            <person name="Kanda K."/>
            <person name="Yokoi T."/>
            <person name="Furuya T."/>
            <person name="Kikkawa E."/>
            <person name="Omura Y."/>
            <person name="Abe K."/>
            <person name="Kamihara K."/>
            <person name="Katsuta N."/>
            <person name="Sato K."/>
            <person name="Tanikawa M."/>
            <person name="Yamazaki M."/>
            <person name="Ninomiya K."/>
            <person name="Ishibashi T."/>
            <person name="Yamashita H."/>
            <person name="Murakawa K."/>
            <person name="Fujimori K."/>
            <person name="Tanai H."/>
            <person name="Kimata M."/>
            <person name="Watanabe M."/>
            <person name="Hiraoka S."/>
            <person name="Chiba Y."/>
            <person name="Ishida S."/>
            <person name="Ono Y."/>
            <person name="Takiguchi S."/>
            <person name="Watanabe S."/>
            <person name="Yosida M."/>
            <person name="Hotuta T."/>
            <person name="Kusano J."/>
            <person name="Kanehori K."/>
            <person name="Takahashi-Fujii A."/>
            <person name="Hara H."/>
            <person name="Tanase T.-O."/>
            <person name="Nomura Y."/>
            <person name="Togiya S."/>
            <person name="Komai F."/>
            <person name="Hara R."/>
            <person name="Takeuchi K."/>
            <person name="Arita M."/>
            <person name="Imose N."/>
            <person name="Musashino K."/>
            <person name="Yuuki H."/>
            <person name="Oshima A."/>
            <person name="Sasaki N."/>
            <person name="Aotsuka S."/>
            <person name="Yoshikawa Y."/>
            <person name="Matsunawa H."/>
            <person name="Ichihara T."/>
            <person name="Shiohata N."/>
            <person name="Sano S."/>
            <person name="Moriya S."/>
            <person name="Momiyama H."/>
            <person name="Satoh N."/>
            <person name="Takami S."/>
            <person name="Terashima Y."/>
            <person name="Suzuki O."/>
            <person name="Nakagawa S."/>
            <person name="Senoh A."/>
            <person name="Mizoguchi H."/>
            <person name="Goto Y."/>
            <person name="Shimizu F."/>
            <person name="Wakebe H."/>
            <person name="Hishigaki H."/>
            <person name="Watanabe T."/>
            <person name="Sugiyama A."/>
            <person name="Takemoto M."/>
            <person name="Kawakami B."/>
            <person name="Yamazaki M."/>
            <person name="Watanabe K."/>
            <person name="Kumagai A."/>
            <person name="Itakura S."/>
            <person name="Fukuzumi Y."/>
            <person name="Fujimori Y."/>
            <person name="Komiyama M."/>
            <person name="Tashiro H."/>
            <person name="Tanigami A."/>
            <person name="Fujiwara T."/>
            <person name="Ono T."/>
            <person name="Yamada K."/>
            <person name="Fujii Y."/>
            <person name="Ozaki K."/>
            <person name="Hirao M."/>
            <person name="Ohmori Y."/>
            <person name="Kawabata A."/>
            <person name="Hikiji T."/>
            <person name="Kobatake N."/>
            <person name="Inagaki H."/>
            <person name="Ikema Y."/>
            <person name="Okamoto S."/>
            <person name="Okitani R."/>
            <person name="Kawakami T."/>
            <person name="Noguchi S."/>
            <person name="Itoh T."/>
            <person name="Shigeta K."/>
            <person name="Senba T."/>
            <person name="Matsumura K."/>
            <person name="Nakajima Y."/>
            <person name="Mizuno T."/>
            <person name="Morinaga M."/>
            <person name="Sasaki M."/>
            <person name="Togashi T."/>
            <person name="Oyama M."/>
            <person name="Hata H."/>
            <person name="Watanabe M."/>
            <person name="Komatsu T."/>
            <person name="Mizushima-Sugano J."/>
            <person name="Satoh T."/>
            <person name="Shirai Y."/>
            <person name="Takahashi Y."/>
            <person name="Nakagawa K."/>
            <person name="Okumura K."/>
            <person name="Nagase T."/>
            <person name="Nomura N."/>
            <person name="Kikuchi H."/>
            <person name="Masuho Y."/>
            <person name="Yamashita R."/>
            <person name="Nakai K."/>
            <person name="Yada T."/>
            <person name="Nakamura Y."/>
            <person name="Ohara O."/>
            <person name="Isogai T."/>
            <person name="Sugano S."/>
        </authorList>
    </citation>
    <scope>NUCLEOTIDE SEQUENCE [LARGE SCALE MRNA] (ISOFORM 2)</scope>
    <source>
        <tissue>Liver</tissue>
    </source>
</reference>
<reference key="3">
    <citation type="journal article" date="2006" name="Nature">
        <title>DNA sequence of human chromosome 17 and analysis of rearrangement in the human lineage.</title>
        <authorList>
            <person name="Zody M.C."/>
            <person name="Garber M."/>
            <person name="Adams D.J."/>
            <person name="Sharpe T."/>
            <person name="Harrow J."/>
            <person name="Lupski J.R."/>
            <person name="Nicholson C."/>
            <person name="Searle S.M."/>
            <person name="Wilming L."/>
            <person name="Young S.K."/>
            <person name="Abouelleil A."/>
            <person name="Allen N.R."/>
            <person name="Bi W."/>
            <person name="Bloom T."/>
            <person name="Borowsky M.L."/>
            <person name="Bugalter B.E."/>
            <person name="Butler J."/>
            <person name="Chang J.L."/>
            <person name="Chen C.-K."/>
            <person name="Cook A."/>
            <person name="Corum B."/>
            <person name="Cuomo C.A."/>
            <person name="de Jong P.J."/>
            <person name="DeCaprio D."/>
            <person name="Dewar K."/>
            <person name="FitzGerald M."/>
            <person name="Gilbert J."/>
            <person name="Gibson R."/>
            <person name="Gnerre S."/>
            <person name="Goldstein S."/>
            <person name="Grafham D.V."/>
            <person name="Grocock R."/>
            <person name="Hafez N."/>
            <person name="Hagopian D.S."/>
            <person name="Hart E."/>
            <person name="Norman C.H."/>
            <person name="Humphray S."/>
            <person name="Jaffe D.B."/>
            <person name="Jones M."/>
            <person name="Kamal M."/>
            <person name="Khodiyar V.K."/>
            <person name="LaButti K."/>
            <person name="Laird G."/>
            <person name="Lehoczky J."/>
            <person name="Liu X."/>
            <person name="Lokyitsang T."/>
            <person name="Loveland J."/>
            <person name="Lui A."/>
            <person name="Macdonald P."/>
            <person name="Major J.E."/>
            <person name="Matthews L."/>
            <person name="Mauceli E."/>
            <person name="McCarroll S.A."/>
            <person name="Mihalev A.H."/>
            <person name="Mudge J."/>
            <person name="Nguyen C."/>
            <person name="Nicol R."/>
            <person name="O'Leary S.B."/>
            <person name="Osoegawa K."/>
            <person name="Schwartz D.C."/>
            <person name="Shaw-Smith C."/>
            <person name="Stankiewicz P."/>
            <person name="Steward C."/>
            <person name="Swarbreck D."/>
            <person name="Venkataraman V."/>
            <person name="Whittaker C.A."/>
            <person name="Yang X."/>
            <person name="Zimmer A.R."/>
            <person name="Bradley A."/>
            <person name="Hubbard T."/>
            <person name="Birren B.W."/>
            <person name="Rogers J."/>
            <person name="Lander E.S."/>
            <person name="Nusbaum C."/>
        </authorList>
    </citation>
    <scope>NUCLEOTIDE SEQUENCE [LARGE SCALE GENOMIC DNA]</scope>
</reference>
<reference key="4">
    <citation type="journal article" date="2004" name="Genome Res.">
        <title>The status, quality, and expansion of the NIH full-length cDNA project: the Mammalian Gene Collection (MGC).</title>
        <authorList>
            <consortium name="The MGC Project Team"/>
        </authorList>
    </citation>
    <scope>NUCLEOTIDE SEQUENCE [LARGE SCALE MRNA] (ISOFORM 2)</scope>
    <source>
        <tissue>Eye</tissue>
        <tissue>Skin</tissue>
    </source>
</reference>
<reference key="5">
    <citation type="journal article" date="2008" name="Proc. Natl. Acad. Sci. U.S.A.">
        <title>A quantitative atlas of mitotic phosphorylation.</title>
        <authorList>
            <person name="Dephoure N."/>
            <person name="Zhou C."/>
            <person name="Villen J."/>
            <person name="Beausoleil S.A."/>
            <person name="Bakalarski C.E."/>
            <person name="Elledge S.J."/>
            <person name="Gygi S.P."/>
        </authorList>
    </citation>
    <scope>IDENTIFICATION BY MASS SPECTROMETRY [LARGE SCALE ANALYSIS]</scope>
    <source>
        <tissue>Cervix carcinoma</tissue>
    </source>
</reference>
<reference key="6">
    <citation type="journal article" date="2012" name="J. Biol. Chem.">
        <title>Phosphatidylinositol transfer protein, cytoplasmic 1 (PITPNC1) binds and transfers phosphatidic acid.</title>
        <authorList>
            <person name="Garner K."/>
            <person name="Hunt A.N."/>
            <person name="Koster G."/>
            <person name="Somerharju P."/>
            <person name="Groves E."/>
            <person name="Li M."/>
            <person name="Raghu P."/>
            <person name="Holic R."/>
            <person name="Cockcroft S."/>
        </authorList>
    </citation>
    <scope>FUNCTION (ISOFORMS 1 AND 2)</scope>
    <scope>CATALYTIC ACTIVITY (ISOFORMS 1 AND 2)</scope>
</reference>
<protein>
    <recommendedName>
        <fullName>Cytoplasmic phosphatidylinositol transfer protein 1</fullName>
    </recommendedName>
    <alternativeName>
        <fullName>Mammalian rdgB homolog beta</fullName>
        <shortName>M-rdgB beta</shortName>
        <shortName>MrdgBbeta</shortName>
    </alternativeName>
    <alternativeName>
        <fullName>Retinal degeneration B homolog beta</fullName>
        <shortName>RdgBbeta</shortName>
    </alternativeName>
</protein>
<keyword id="KW-0025">Alternative splicing</keyword>
<keyword id="KW-0963">Cytoplasm</keyword>
<keyword id="KW-0445">Lipid transport</keyword>
<keyword id="KW-0446">Lipid-binding</keyword>
<keyword id="KW-0597">Phosphoprotein</keyword>
<keyword id="KW-1267">Proteomics identification</keyword>
<keyword id="KW-1185">Reference proteome</keyword>
<keyword id="KW-0813">Transport</keyword>
<name>PITC1_HUMAN</name>
<accession>Q9UKF7</accession>
<accession>A8K473</accession>
<accession>J3QR20</accession>
<accession>Q96I07</accession>